<feature type="chain" id="PRO_0000114117" description="Chromosomal replication initiator protein DnaA">
    <location>
        <begin position="1"/>
        <end position="445"/>
    </location>
</feature>
<feature type="region of interest" description="Domain I, interacts with DnaA modulators" evidence="1">
    <location>
        <begin position="1"/>
        <end position="73"/>
    </location>
</feature>
<feature type="region of interest" description="Domain II" evidence="1">
    <location>
        <begin position="73"/>
        <end position="102"/>
    </location>
</feature>
<feature type="region of interest" description="Domain III, AAA+ region" evidence="1">
    <location>
        <begin position="103"/>
        <end position="323"/>
    </location>
</feature>
<feature type="region of interest" description="Domain IV, binds dsDNA" evidence="1">
    <location>
        <begin position="324"/>
        <end position="445"/>
    </location>
</feature>
<feature type="binding site" evidence="1">
    <location>
        <position position="147"/>
    </location>
    <ligand>
        <name>ATP</name>
        <dbReference type="ChEBI" id="CHEBI:30616"/>
    </ligand>
</feature>
<feature type="binding site" evidence="1">
    <location>
        <position position="149"/>
    </location>
    <ligand>
        <name>ATP</name>
        <dbReference type="ChEBI" id="CHEBI:30616"/>
    </ligand>
</feature>
<feature type="binding site" evidence="1">
    <location>
        <position position="150"/>
    </location>
    <ligand>
        <name>ATP</name>
        <dbReference type="ChEBI" id="CHEBI:30616"/>
    </ligand>
</feature>
<feature type="binding site" evidence="1">
    <location>
        <position position="151"/>
    </location>
    <ligand>
        <name>ATP</name>
        <dbReference type="ChEBI" id="CHEBI:30616"/>
    </ligand>
</feature>
<gene>
    <name evidence="1" type="primary">dnaA</name>
</gene>
<name>DNAA_ACHLA</name>
<proteinExistence type="inferred from homology"/>
<protein>
    <recommendedName>
        <fullName evidence="1">Chromosomal replication initiator protein DnaA</fullName>
    </recommendedName>
</protein>
<dbReference type="EMBL" id="AF248639">
    <property type="protein sequence ID" value="AAF75986.1"/>
    <property type="molecule type" value="Genomic_DNA"/>
</dbReference>
<dbReference type="SMR" id="Q9KHU8"/>
<dbReference type="GO" id="GO:0005737">
    <property type="term" value="C:cytoplasm"/>
    <property type="evidence" value="ECO:0007669"/>
    <property type="project" value="UniProtKB-SubCell"/>
</dbReference>
<dbReference type="GO" id="GO:0005886">
    <property type="term" value="C:plasma membrane"/>
    <property type="evidence" value="ECO:0007669"/>
    <property type="project" value="TreeGrafter"/>
</dbReference>
<dbReference type="GO" id="GO:0005524">
    <property type="term" value="F:ATP binding"/>
    <property type="evidence" value="ECO:0007669"/>
    <property type="project" value="UniProtKB-UniRule"/>
</dbReference>
<dbReference type="GO" id="GO:0016887">
    <property type="term" value="F:ATP hydrolysis activity"/>
    <property type="evidence" value="ECO:0007669"/>
    <property type="project" value="InterPro"/>
</dbReference>
<dbReference type="GO" id="GO:0003688">
    <property type="term" value="F:DNA replication origin binding"/>
    <property type="evidence" value="ECO:0007669"/>
    <property type="project" value="UniProtKB-UniRule"/>
</dbReference>
<dbReference type="GO" id="GO:0008289">
    <property type="term" value="F:lipid binding"/>
    <property type="evidence" value="ECO:0007669"/>
    <property type="project" value="UniProtKB-KW"/>
</dbReference>
<dbReference type="GO" id="GO:0006270">
    <property type="term" value="P:DNA replication initiation"/>
    <property type="evidence" value="ECO:0007669"/>
    <property type="project" value="UniProtKB-UniRule"/>
</dbReference>
<dbReference type="GO" id="GO:0006275">
    <property type="term" value="P:regulation of DNA replication"/>
    <property type="evidence" value="ECO:0007669"/>
    <property type="project" value="UniProtKB-UniRule"/>
</dbReference>
<dbReference type="CDD" id="cd00009">
    <property type="entry name" value="AAA"/>
    <property type="match status" value="1"/>
</dbReference>
<dbReference type="CDD" id="cd06571">
    <property type="entry name" value="Bac_DnaA_C"/>
    <property type="match status" value="1"/>
</dbReference>
<dbReference type="Gene3D" id="1.10.1750.10">
    <property type="match status" value="1"/>
</dbReference>
<dbReference type="Gene3D" id="1.10.8.60">
    <property type="match status" value="1"/>
</dbReference>
<dbReference type="Gene3D" id="3.30.300.180">
    <property type="match status" value="1"/>
</dbReference>
<dbReference type="Gene3D" id="3.40.50.300">
    <property type="entry name" value="P-loop containing nucleotide triphosphate hydrolases"/>
    <property type="match status" value="1"/>
</dbReference>
<dbReference type="HAMAP" id="MF_00377">
    <property type="entry name" value="DnaA_bact"/>
    <property type="match status" value="1"/>
</dbReference>
<dbReference type="InterPro" id="IPR003593">
    <property type="entry name" value="AAA+_ATPase"/>
</dbReference>
<dbReference type="InterPro" id="IPR001957">
    <property type="entry name" value="Chromosome_initiator_DnaA"/>
</dbReference>
<dbReference type="InterPro" id="IPR020591">
    <property type="entry name" value="Chromosome_initiator_DnaA-like"/>
</dbReference>
<dbReference type="InterPro" id="IPR018312">
    <property type="entry name" value="Chromosome_initiator_DnaA_CS"/>
</dbReference>
<dbReference type="InterPro" id="IPR013159">
    <property type="entry name" value="DnaA_C"/>
</dbReference>
<dbReference type="InterPro" id="IPR013317">
    <property type="entry name" value="DnaA_dom"/>
</dbReference>
<dbReference type="InterPro" id="IPR024633">
    <property type="entry name" value="DnaA_N_dom"/>
</dbReference>
<dbReference type="InterPro" id="IPR038454">
    <property type="entry name" value="DnaA_N_sf"/>
</dbReference>
<dbReference type="InterPro" id="IPR027417">
    <property type="entry name" value="P-loop_NTPase"/>
</dbReference>
<dbReference type="InterPro" id="IPR010921">
    <property type="entry name" value="Trp_repressor/repl_initiator"/>
</dbReference>
<dbReference type="NCBIfam" id="TIGR00362">
    <property type="entry name" value="DnaA"/>
    <property type="match status" value="1"/>
</dbReference>
<dbReference type="PANTHER" id="PTHR30050">
    <property type="entry name" value="CHROMOSOMAL REPLICATION INITIATOR PROTEIN DNAA"/>
    <property type="match status" value="1"/>
</dbReference>
<dbReference type="PANTHER" id="PTHR30050:SF2">
    <property type="entry name" value="CHROMOSOMAL REPLICATION INITIATOR PROTEIN DNAA"/>
    <property type="match status" value="1"/>
</dbReference>
<dbReference type="Pfam" id="PF00308">
    <property type="entry name" value="Bac_DnaA"/>
    <property type="match status" value="1"/>
</dbReference>
<dbReference type="Pfam" id="PF08299">
    <property type="entry name" value="Bac_DnaA_C"/>
    <property type="match status" value="1"/>
</dbReference>
<dbReference type="Pfam" id="PF11638">
    <property type="entry name" value="DnaA_N"/>
    <property type="match status" value="1"/>
</dbReference>
<dbReference type="PRINTS" id="PR00051">
    <property type="entry name" value="DNAA"/>
</dbReference>
<dbReference type="SMART" id="SM00382">
    <property type="entry name" value="AAA"/>
    <property type="match status" value="1"/>
</dbReference>
<dbReference type="SMART" id="SM00760">
    <property type="entry name" value="Bac_DnaA_C"/>
    <property type="match status" value="1"/>
</dbReference>
<dbReference type="SUPFAM" id="SSF52540">
    <property type="entry name" value="P-loop containing nucleoside triphosphate hydrolases"/>
    <property type="match status" value="1"/>
</dbReference>
<dbReference type="SUPFAM" id="SSF48295">
    <property type="entry name" value="TrpR-like"/>
    <property type="match status" value="1"/>
</dbReference>
<dbReference type="PROSITE" id="PS01008">
    <property type="entry name" value="DNAA"/>
    <property type="match status" value="1"/>
</dbReference>
<comment type="function">
    <text evidence="1">Plays an essential role in the initiation and regulation of chromosomal replication. ATP-DnaA binds to the origin of replication (oriC) to initiate formation of the DNA replication initiation complex once per cell cycle. Binds the DnaA box (a 9 base pair repeat at the origin) and separates the double-stranded (ds)DNA. Forms a right-handed helical filament on oriC DNA; dsDNA binds to the exterior of the filament while single-stranded (ss)DNA is stabiized in the filament's interior. The ATP-DnaA-oriC complex binds and stabilizes one strand of the AT-rich DNA unwinding element (DUE), permitting loading of DNA polymerase. After initiation quickly degrades to an ADP-DnaA complex that is not apt for DNA replication. Binds acidic phospholipids.</text>
</comment>
<comment type="subunit">
    <text evidence="1">Oligomerizes as a right-handed, spiral filament on DNA at oriC.</text>
</comment>
<comment type="subcellular location">
    <subcellularLocation>
        <location evidence="1">Cytoplasm</location>
    </subcellularLocation>
</comment>
<comment type="domain">
    <text evidence="1">Domain I is involved in oligomerization and binding regulators, domain II is flexibile and of varying length in different bacteria, domain III forms the AAA+ region, while domain IV binds dsDNA.</text>
</comment>
<comment type="similarity">
    <text evidence="1">Belongs to the DnaA family.</text>
</comment>
<organism>
    <name type="scientific">Acholeplasma laidlawii</name>
    <dbReference type="NCBI Taxonomy" id="2148"/>
    <lineage>
        <taxon>Bacteria</taxon>
        <taxon>Bacillati</taxon>
        <taxon>Mycoplasmatota</taxon>
        <taxon>Mollicutes</taxon>
        <taxon>Acholeplasmatales</taxon>
        <taxon>Acholeplasmataceae</taxon>
        <taxon>Acholeplasma</taxon>
    </lineage>
</organism>
<sequence length="445" mass="51047">MSPNSTLWQTILQDLEKLYNEETYNELFLPVTSTFKDQNGLLTMVVANEFLKNRINKLYIAKINELATKYSSTPVRLKFVSQEEVIEEPVADRKLTIDYRQGNLNSTYTFDSFVVGKSNMFAFRMAMKVADHPGAVANPFYIFGDVGLGKTHLMQAIGNYILDNDVEKRILYVKADNFIEDFVSLLSRNKNKTEEFNAKYKDIDVILVDDIQIMANASKTQMEFFKLFDYLYLNNKQIVITSDKPASQLTNIMPRLTTRFEAGLSVDIQIPELEHRISILKRKTATLDANLEVSEDILTFIASQFAANIREMEGALIRLISYAQTFNLEITMNVVEEALGAVLKTKKKTNDLNENNYDKIQSIVADYFQVSLPDLIGKKRHAKFTLPRHIAMYLIKLKYNIPYKTIGSLFNDRDHSTVLSACEKVERDMRMDSNLKFAVDSIVKK</sequence>
<evidence type="ECO:0000255" key="1">
    <source>
        <dbReference type="HAMAP-Rule" id="MF_00377"/>
    </source>
</evidence>
<reference key="1">
    <citation type="journal article" date="2000" name="Mol. Biol. (Mosk.)">
        <title>Analysis of genes, coding for DNA gyrase from the mycoplasma Acholeplasma laidlawii PG-8B.</title>
        <authorList>
            <person name="Taganov K.D."/>
            <person name="Gushchin A.E."/>
            <person name="Akopian T.A."/>
            <person name="Oparina N.Y."/>
            <person name="Abramycheva N.Y."/>
            <person name="Govorun V.M."/>
        </authorList>
    </citation>
    <scope>NUCLEOTIDE SEQUENCE [GENOMIC DNA]</scope>
    <source>
        <strain>PG-8B</strain>
    </source>
</reference>
<accession>Q9KHU8</accession>
<keyword id="KW-0067">ATP-binding</keyword>
<keyword id="KW-0963">Cytoplasm</keyword>
<keyword id="KW-0235">DNA replication</keyword>
<keyword id="KW-0238">DNA-binding</keyword>
<keyword id="KW-0446">Lipid-binding</keyword>
<keyword id="KW-0547">Nucleotide-binding</keyword>